<reference key="1">
    <citation type="journal article" date="1993" name="Dev. Growth Differ.">
        <title>A novel mesoderm-specific cDNA isolated from a mouse embryonal carcinoma cell line.</title>
        <authorList>
            <person name="Sado T."/>
            <person name="Nakajima N."/>
            <person name="Tada M."/>
            <person name="Takagi N."/>
        </authorList>
    </citation>
    <scope>NUCLEOTIDE SEQUENCE [MRNA] (ISOFORM 1)</scope>
    <scope>DEVELOPMENTAL STAGE</scope>
</reference>
<reference key="2">
    <citation type="journal article" date="2002" name="Hum. Mol. Genet.">
        <title>Identification and characterization of an imprinted antisense RNA (MESTIT1) in the human MEST locus on chromosome 7q32.</title>
        <authorList>
            <person name="Nakabayashi K."/>
            <person name="Bentley L."/>
            <person name="Hitchins M.P."/>
            <person name="Mitsuya K."/>
            <person name="Meguro M."/>
            <person name="Minagawa S."/>
            <person name="Bamforth J.S."/>
            <person name="Stanier P."/>
            <person name="Preece M."/>
            <person name="Weksberg R."/>
            <person name="Oshimura M."/>
            <person name="Moore G.E."/>
            <person name="Scherer S.W."/>
        </authorList>
    </citation>
    <scope>NUCLEOTIDE SEQUENCE [MRNA] (ISOFORM 2)</scope>
    <scope>ALTERNATIVE SPLICING</scope>
    <source>
        <strain>C57BL/6J</strain>
    </source>
</reference>
<reference key="3">
    <citation type="journal article" date="2005" name="Science">
        <title>The transcriptional landscape of the mammalian genome.</title>
        <authorList>
            <person name="Carninci P."/>
            <person name="Kasukawa T."/>
            <person name="Katayama S."/>
            <person name="Gough J."/>
            <person name="Frith M.C."/>
            <person name="Maeda N."/>
            <person name="Oyama R."/>
            <person name="Ravasi T."/>
            <person name="Lenhard B."/>
            <person name="Wells C."/>
            <person name="Kodzius R."/>
            <person name="Shimokawa K."/>
            <person name="Bajic V.B."/>
            <person name="Brenner S.E."/>
            <person name="Batalov S."/>
            <person name="Forrest A.R."/>
            <person name="Zavolan M."/>
            <person name="Davis M.J."/>
            <person name="Wilming L.G."/>
            <person name="Aidinis V."/>
            <person name="Allen J.E."/>
            <person name="Ambesi-Impiombato A."/>
            <person name="Apweiler R."/>
            <person name="Aturaliya R.N."/>
            <person name="Bailey T.L."/>
            <person name="Bansal M."/>
            <person name="Baxter L."/>
            <person name="Beisel K.W."/>
            <person name="Bersano T."/>
            <person name="Bono H."/>
            <person name="Chalk A.M."/>
            <person name="Chiu K.P."/>
            <person name="Choudhary V."/>
            <person name="Christoffels A."/>
            <person name="Clutterbuck D.R."/>
            <person name="Crowe M.L."/>
            <person name="Dalla E."/>
            <person name="Dalrymple B.P."/>
            <person name="de Bono B."/>
            <person name="Della Gatta G."/>
            <person name="di Bernardo D."/>
            <person name="Down T."/>
            <person name="Engstrom P."/>
            <person name="Fagiolini M."/>
            <person name="Faulkner G."/>
            <person name="Fletcher C.F."/>
            <person name="Fukushima T."/>
            <person name="Furuno M."/>
            <person name="Futaki S."/>
            <person name="Gariboldi M."/>
            <person name="Georgii-Hemming P."/>
            <person name="Gingeras T.R."/>
            <person name="Gojobori T."/>
            <person name="Green R.E."/>
            <person name="Gustincich S."/>
            <person name="Harbers M."/>
            <person name="Hayashi Y."/>
            <person name="Hensch T.K."/>
            <person name="Hirokawa N."/>
            <person name="Hill D."/>
            <person name="Huminiecki L."/>
            <person name="Iacono M."/>
            <person name="Ikeo K."/>
            <person name="Iwama A."/>
            <person name="Ishikawa T."/>
            <person name="Jakt M."/>
            <person name="Kanapin A."/>
            <person name="Katoh M."/>
            <person name="Kawasawa Y."/>
            <person name="Kelso J."/>
            <person name="Kitamura H."/>
            <person name="Kitano H."/>
            <person name="Kollias G."/>
            <person name="Krishnan S.P."/>
            <person name="Kruger A."/>
            <person name="Kummerfeld S.K."/>
            <person name="Kurochkin I.V."/>
            <person name="Lareau L.F."/>
            <person name="Lazarevic D."/>
            <person name="Lipovich L."/>
            <person name="Liu J."/>
            <person name="Liuni S."/>
            <person name="McWilliam S."/>
            <person name="Madan Babu M."/>
            <person name="Madera M."/>
            <person name="Marchionni L."/>
            <person name="Matsuda H."/>
            <person name="Matsuzawa S."/>
            <person name="Miki H."/>
            <person name="Mignone F."/>
            <person name="Miyake S."/>
            <person name="Morris K."/>
            <person name="Mottagui-Tabar S."/>
            <person name="Mulder N."/>
            <person name="Nakano N."/>
            <person name="Nakauchi H."/>
            <person name="Ng P."/>
            <person name="Nilsson R."/>
            <person name="Nishiguchi S."/>
            <person name="Nishikawa S."/>
            <person name="Nori F."/>
            <person name="Ohara O."/>
            <person name="Okazaki Y."/>
            <person name="Orlando V."/>
            <person name="Pang K.C."/>
            <person name="Pavan W.J."/>
            <person name="Pavesi G."/>
            <person name="Pesole G."/>
            <person name="Petrovsky N."/>
            <person name="Piazza S."/>
            <person name="Reed J."/>
            <person name="Reid J.F."/>
            <person name="Ring B.Z."/>
            <person name="Ringwald M."/>
            <person name="Rost B."/>
            <person name="Ruan Y."/>
            <person name="Salzberg S.L."/>
            <person name="Sandelin A."/>
            <person name="Schneider C."/>
            <person name="Schoenbach C."/>
            <person name="Sekiguchi K."/>
            <person name="Semple C.A."/>
            <person name="Seno S."/>
            <person name="Sessa L."/>
            <person name="Sheng Y."/>
            <person name="Shibata Y."/>
            <person name="Shimada H."/>
            <person name="Shimada K."/>
            <person name="Silva D."/>
            <person name="Sinclair B."/>
            <person name="Sperling S."/>
            <person name="Stupka E."/>
            <person name="Sugiura K."/>
            <person name="Sultana R."/>
            <person name="Takenaka Y."/>
            <person name="Taki K."/>
            <person name="Tammoja K."/>
            <person name="Tan S.L."/>
            <person name="Tang S."/>
            <person name="Taylor M.S."/>
            <person name="Tegner J."/>
            <person name="Teichmann S.A."/>
            <person name="Ueda H.R."/>
            <person name="van Nimwegen E."/>
            <person name="Verardo R."/>
            <person name="Wei C.L."/>
            <person name="Yagi K."/>
            <person name="Yamanishi H."/>
            <person name="Zabarovsky E."/>
            <person name="Zhu S."/>
            <person name="Zimmer A."/>
            <person name="Hide W."/>
            <person name="Bult C."/>
            <person name="Grimmond S.M."/>
            <person name="Teasdale R.D."/>
            <person name="Liu E.T."/>
            <person name="Brusic V."/>
            <person name="Quackenbush J."/>
            <person name="Wahlestedt C."/>
            <person name="Mattick J.S."/>
            <person name="Hume D.A."/>
            <person name="Kai C."/>
            <person name="Sasaki D."/>
            <person name="Tomaru Y."/>
            <person name="Fukuda S."/>
            <person name="Kanamori-Katayama M."/>
            <person name="Suzuki M."/>
            <person name="Aoki J."/>
            <person name="Arakawa T."/>
            <person name="Iida J."/>
            <person name="Imamura K."/>
            <person name="Itoh M."/>
            <person name="Kato T."/>
            <person name="Kawaji H."/>
            <person name="Kawagashira N."/>
            <person name="Kawashima T."/>
            <person name="Kojima M."/>
            <person name="Kondo S."/>
            <person name="Konno H."/>
            <person name="Nakano K."/>
            <person name="Ninomiya N."/>
            <person name="Nishio T."/>
            <person name="Okada M."/>
            <person name="Plessy C."/>
            <person name="Shibata K."/>
            <person name="Shiraki T."/>
            <person name="Suzuki S."/>
            <person name="Tagami M."/>
            <person name="Waki K."/>
            <person name="Watahiki A."/>
            <person name="Okamura-Oho Y."/>
            <person name="Suzuki H."/>
            <person name="Kawai J."/>
            <person name="Hayashizaki Y."/>
        </authorList>
    </citation>
    <scope>NUCLEOTIDE SEQUENCE [LARGE SCALE MRNA] (ISOFORM 1)</scope>
    <source>
        <strain>C57BL/6J</strain>
        <tissue>Amnion</tissue>
        <tissue>Embryo</tissue>
        <tissue>Heart</tissue>
        <tissue>Kidney</tissue>
        <tissue>Wolffian duct</tissue>
    </source>
</reference>
<reference key="4">
    <citation type="journal article" date="2004" name="Genome Res.">
        <title>The status, quality, and expansion of the NIH full-length cDNA project: the Mammalian Gene Collection (MGC).</title>
        <authorList>
            <consortium name="The MGC Project Team"/>
        </authorList>
    </citation>
    <scope>NUCLEOTIDE SEQUENCE [LARGE SCALE MRNA] (ISOFORM 1)</scope>
    <source>
        <strain>Czech II</strain>
        <tissue>Mammary tumor</tissue>
    </source>
</reference>
<reference key="5">
    <citation type="journal article" date="1997" name="Hum. Mol. Genet.">
        <title>Genomic structure and parent-of-origin-specific methylation of Peg1.</title>
        <authorList>
            <person name="Lefebvre L."/>
            <person name="Viville S."/>
            <person name="Barton S.C."/>
            <person name="Ishino F."/>
            <person name="Surani M.A."/>
        </authorList>
    </citation>
    <scope>NUCLEOTIDE SEQUENCE [GENOMIC DNA] OF 1-60</scope>
    <source>
        <strain>129/Sv</strain>
    </source>
</reference>
<reference key="6">
    <citation type="journal article" date="1995" name="Nat. Genet.">
        <title>Peg1/Mest imprinted gene on chromosome 6 identified by cDNA subtraction hybridization.</title>
        <authorList>
            <person name="Kaneko-Ishino T."/>
            <person name="Kuroiwa Y."/>
            <person name="Miyoshi N."/>
            <person name="Kohda T."/>
            <person name="Suzuki R."/>
            <person name="Yokoyama M."/>
            <person name="Viville S."/>
            <person name="Barton S.C."/>
            <person name="Ishino F."/>
            <person name="Surani M.A."/>
        </authorList>
    </citation>
    <scope>IDENTIFICATION</scope>
    <scope>TISSUE SPECIFICITY</scope>
    <source>
        <strain>129/Sv</strain>
    </source>
</reference>
<reference key="7">
    <citation type="journal article" date="2008" name="FASEB J.">
        <title>Mesoderm-specific transcript is associated with fat mass expansion in response to a positive energy balance.</title>
        <authorList>
            <person name="Nikonova L."/>
            <person name="Koza R.A."/>
            <person name="Mendoza T."/>
            <person name="Chao P.-M."/>
            <person name="Curley J.P."/>
            <person name="Kozak L.P."/>
        </authorList>
    </citation>
    <scope>SUBCELLULAR LOCATION</scope>
</reference>
<proteinExistence type="evidence at transcript level"/>
<dbReference type="EC" id="3.-.-.-"/>
<dbReference type="EMBL" id="D16262">
    <property type="protein sequence ID" value="BAA03795.1"/>
    <property type="molecule type" value="mRNA"/>
</dbReference>
<dbReference type="EMBL" id="AF482999">
    <property type="protein sequence ID" value="AAM78507.1"/>
    <property type="molecule type" value="mRNA"/>
</dbReference>
<dbReference type="EMBL" id="AK032881">
    <property type="protein sequence ID" value="BAC28068.1"/>
    <property type="molecule type" value="mRNA"/>
</dbReference>
<dbReference type="EMBL" id="AK034949">
    <property type="protein sequence ID" value="BAC28891.1"/>
    <property type="molecule type" value="mRNA"/>
</dbReference>
<dbReference type="EMBL" id="AK168714">
    <property type="protein sequence ID" value="BAE40556.1"/>
    <property type="molecule type" value="mRNA"/>
</dbReference>
<dbReference type="EMBL" id="AK168732">
    <property type="protein sequence ID" value="BAE40573.1"/>
    <property type="molecule type" value="mRNA"/>
</dbReference>
<dbReference type="EMBL" id="AK168743">
    <property type="protein sequence ID" value="BAE40584.1"/>
    <property type="molecule type" value="mRNA"/>
</dbReference>
<dbReference type="EMBL" id="AK168995">
    <property type="protein sequence ID" value="BAE40794.1"/>
    <property type="molecule type" value="mRNA"/>
</dbReference>
<dbReference type="EMBL" id="AK169095">
    <property type="protein sequence ID" value="BAE40878.1"/>
    <property type="molecule type" value="mRNA"/>
</dbReference>
<dbReference type="EMBL" id="AK169266">
    <property type="protein sequence ID" value="BAE41027.1"/>
    <property type="molecule type" value="mRNA"/>
</dbReference>
<dbReference type="EMBL" id="BC004019">
    <property type="protein sequence ID" value="AAH04019.1"/>
    <property type="molecule type" value="mRNA"/>
</dbReference>
<dbReference type="EMBL" id="BC006639">
    <property type="protein sequence ID" value="AAH06639.1"/>
    <property type="molecule type" value="mRNA"/>
</dbReference>
<dbReference type="EMBL" id="AF017994">
    <property type="protein sequence ID" value="AAC53396.1"/>
    <property type="molecule type" value="Genomic_DNA"/>
</dbReference>
<dbReference type="CCDS" id="CCDS19979.1">
    <molecule id="Q07646-1"/>
</dbReference>
<dbReference type="CCDS" id="CCDS80513.1">
    <molecule id="Q07646-2"/>
</dbReference>
<dbReference type="RefSeq" id="NP_001239221.1">
    <property type="nucleotide sequence ID" value="NM_001252292.1"/>
</dbReference>
<dbReference type="RefSeq" id="NP_001239222.1">
    <molecule id="Q07646-2"/>
    <property type="nucleotide sequence ID" value="NM_001252293.1"/>
</dbReference>
<dbReference type="RefSeq" id="NP_032616.1">
    <molecule id="Q07646-1"/>
    <property type="nucleotide sequence ID" value="NM_008590.2"/>
</dbReference>
<dbReference type="RefSeq" id="XP_036021793.1">
    <molecule id="Q07646-1"/>
    <property type="nucleotide sequence ID" value="XM_036165900.1"/>
</dbReference>
<dbReference type="SMR" id="Q07646"/>
<dbReference type="BioGRID" id="201402">
    <property type="interactions" value="2"/>
</dbReference>
<dbReference type="FunCoup" id="Q07646">
    <property type="interactions" value="500"/>
</dbReference>
<dbReference type="IntAct" id="Q07646">
    <property type="interactions" value="1"/>
</dbReference>
<dbReference type="MINT" id="Q07646"/>
<dbReference type="STRING" id="10090.ENSMUSP00000117713"/>
<dbReference type="ESTHER" id="mouse-MEST">
    <property type="family name" value="MEST-like"/>
</dbReference>
<dbReference type="MEROPS" id="S33.972"/>
<dbReference type="GlyCosmos" id="Q07646">
    <property type="glycosylation" value="1 site, No reported glycans"/>
</dbReference>
<dbReference type="GlyGen" id="Q07646">
    <property type="glycosylation" value="1 site"/>
</dbReference>
<dbReference type="PhosphoSitePlus" id="Q07646"/>
<dbReference type="PaxDb" id="10090-ENSMUSP00000129639"/>
<dbReference type="PeptideAtlas" id="Q07646"/>
<dbReference type="ProteomicsDB" id="295931">
    <molecule id="Q07646-1"/>
</dbReference>
<dbReference type="ProteomicsDB" id="295932">
    <molecule id="Q07646-2"/>
</dbReference>
<dbReference type="Antibodypedia" id="946">
    <property type="antibodies" value="119 antibodies from 31 providers"/>
</dbReference>
<dbReference type="DNASU" id="17294"/>
<dbReference type="Ensembl" id="ENSMUST00000157040.8">
    <molecule id="Q07646-2"/>
    <property type="protein sequence ID" value="ENSMUSP00000119038.3"/>
    <property type="gene ID" value="ENSMUSG00000051855.16"/>
</dbReference>
<dbReference type="Ensembl" id="ENSMUST00000163949.9">
    <molecule id="Q07646-1"/>
    <property type="protein sequence ID" value="ENSMUSP00000129639.3"/>
    <property type="gene ID" value="ENSMUSG00000051855.16"/>
</dbReference>
<dbReference type="GeneID" id="17294"/>
<dbReference type="KEGG" id="mmu:17294"/>
<dbReference type="UCSC" id="uc009bfs.2">
    <molecule id="Q07646-1"/>
    <property type="organism name" value="mouse"/>
</dbReference>
<dbReference type="AGR" id="MGI:96968"/>
<dbReference type="CTD" id="4232"/>
<dbReference type="MGI" id="MGI:96968">
    <property type="gene designation" value="Mest"/>
</dbReference>
<dbReference type="VEuPathDB" id="HostDB:ENSMUSG00000051855"/>
<dbReference type="eggNOG" id="KOG4178">
    <property type="taxonomic scope" value="Eukaryota"/>
</dbReference>
<dbReference type="GeneTree" id="ENSGT00510000047602"/>
<dbReference type="InParanoid" id="Q07646"/>
<dbReference type="OrthoDB" id="7130006at2759"/>
<dbReference type="PhylomeDB" id="Q07646"/>
<dbReference type="TreeFam" id="TF329307"/>
<dbReference type="BioGRID-ORCS" id="17294">
    <property type="hits" value="2 hits in 80 CRISPR screens"/>
</dbReference>
<dbReference type="ChiTaRS" id="Mest">
    <property type="organism name" value="mouse"/>
</dbReference>
<dbReference type="PRO" id="PR:Q07646"/>
<dbReference type="Proteomes" id="UP000000589">
    <property type="component" value="Chromosome 6"/>
</dbReference>
<dbReference type="RNAct" id="Q07646">
    <property type="molecule type" value="protein"/>
</dbReference>
<dbReference type="Bgee" id="ENSMUSG00000051855">
    <property type="expression patterns" value="Expressed in humerus cartilage element and 284 other cell types or tissues"/>
</dbReference>
<dbReference type="ExpressionAtlas" id="Q07646">
    <property type="expression patterns" value="baseline and differential"/>
</dbReference>
<dbReference type="GO" id="GO:0005783">
    <property type="term" value="C:endoplasmic reticulum"/>
    <property type="evidence" value="ECO:0000314"/>
    <property type="project" value="UniProtKB"/>
</dbReference>
<dbReference type="GO" id="GO:0005789">
    <property type="term" value="C:endoplasmic reticulum membrane"/>
    <property type="evidence" value="ECO:0007669"/>
    <property type="project" value="UniProtKB-SubCell"/>
</dbReference>
<dbReference type="GO" id="GO:0016787">
    <property type="term" value="F:hydrolase activity"/>
    <property type="evidence" value="ECO:0007669"/>
    <property type="project" value="UniProtKB-KW"/>
</dbReference>
<dbReference type="GO" id="GO:0010883">
    <property type="term" value="P:regulation of lipid storage"/>
    <property type="evidence" value="ECO:0000315"/>
    <property type="project" value="UniProtKB"/>
</dbReference>
<dbReference type="GO" id="GO:0032526">
    <property type="term" value="P:response to retinoic acid"/>
    <property type="evidence" value="ECO:0000314"/>
    <property type="project" value="BHF-UCL"/>
</dbReference>
<dbReference type="FunFam" id="3.40.50.1820:FF:000041">
    <property type="entry name" value="Mesoderm-specific transcript homolog protein"/>
    <property type="match status" value="1"/>
</dbReference>
<dbReference type="Gene3D" id="3.40.50.1820">
    <property type="entry name" value="alpha/beta hydrolase"/>
    <property type="match status" value="1"/>
</dbReference>
<dbReference type="InterPro" id="IPR000073">
    <property type="entry name" value="AB_hydrolase_1"/>
</dbReference>
<dbReference type="InterPro" id="IPR029058">
    <property type="entry name" value="AB_hydrolase_fold"/>
</dbReference>
<dbReference type="InterPro" id="IPR050266">
    <property type="entry name" value="AB_hydrolase_sf"/>
</dbReference>
<dbReference type="InterPro" id="IPR000639">
    <property type="entry name" value="Epox_hydrolase-like"/>
</dbReference>
<dbReference type="PANTHER" id="PTHR43798:SF33">
    <property type="entry name" value="HYDROLASE, PUTATIVE (AFU_ORTHOLOGUE AFUA_2G14860)-RELATED"/>
    <property type="match status" value="1"/>
</dbReference>
<dbReference type="PANTHER" id="PTHR43798">
    <property type="entry name" value="MONOACYLGLYCEROL LIPASE"/>
    <property type="match status" value="1"/>
</dbReference>
<dbReference type="Pfam" id="PF00561">
    <property type="entry name" value="Abhydrolase_1"/>
    <property type="match status" value="1"/>
</dbReference>
<dbReference type="PRINTS" id="PR00412">
    <property type="entry name" value="EPOXHYDRLASE"/>
</dbReference>
<dbReference type="SUPFAM" id="SSF53474">
    <property type="entry name" value="alpha/beta-Hydrolases"/>
    <property type="match status" value="1"/>
</dbReference>
<name>MEST_MOUSE</name>
<sequence>MVRRDRLRRMREWWVQVGLLAVPLLAAYLHIPPPQLSPALHSWKTSGKFFTYKGLRIFYQDSVGVVGSPEIVVLLHGFPTSSYDWYKIWEGLTLRFHRVIALDFLGFGFSDKPRPHQYSIFEQASIVESLLRHLGLQNRRINLLSHDYGDIVAQELLYRYKQNRSGRLTIKSLCLSNGGIFPETHRPLLLQKLLKDGGVLSPILTRLMNFFVFSRGLTPVFGPYTRPTESELWDMWAVIRNNDGNLVIDSLLQYINQRKKFRRRWVGALASVSIPIHFIYGPLDPINPYPEFLELYRKTLPRSTVSILDDHISHYPQLEDPMGFLNAYMGFINSF</sequence>
<protein>
    <recommendedName>
        <fullName>Mesoderm-specific transcript protein</fullName>
        <ecNumber>3.-.-.-</ecNumber>
    </recommendedName>
    <alternativeName>
        <fullName>Paternally-expressed gene 1 protein</fullName>
    </alternativeName>
</protein>
<evidence type="ECO:0000255" key="1"/>
<evidence type="ECO:0000269" key="2">
    <source>
    </source>
</evidence>
<evidence type="ECO:0000269" key="3">
    <source>
    </source>
</evidence>
<evidence type="ECO:0000269" key="4">
    <source ref="1"/>
</evidence>
<evidence type="ECO:0000303" key="5">
    <source>
    </source>
</evidence>
<evidence type="ECO:0000305" key="6"/>
<accession>Q07646</accession>
<accession>Q792T8</accession>
<accession>Q8BS88</accession>
<accession>Q8K463</accession>
<accession>Q99KT5</accession>
<comment type="subcellular location">
    <subcellularLocation>
        <location evidence="2">Endoplasmic reticulum membrane</location>
        <topology evidence="2">Multi-pass membrane protein</topology>
    </subcellularLocation>
</comment>
<comment type="alternative products">
    <event type="alternative splicing"/>
    <isoform>
        <id>Q07646-1</id>
        <name>1</name>
        <sequence type="displayed"/>
    </isoform>
    <isoform>
        <id>Q07646-2</id>
        <name>2</name>
        <name>MEST intronic transcript 1</name>
        <sequence type="described" ref="VSP_024534"/>
    </isoform>
</comment>
<comment type="tissue specificity">
    <text evidence="3">Expressed in mesodermal tissues. Isoform 1 is exclusively expressed from the paternal allele in all fetal tissues and cell lines examined, whereas isoform 2 is preferentially expressed from the paternal allele in a tissue-type-specific manner.</text>
</comment>
<comment type="developmental stage">
    <text evidence="4">Expressed in the nascent mesoderm of gastrulating embryos. At 7.0 dpc expression detected in both the intraembryonic mesoderm and the extraembryonic mesoderm cells of the amniotic fold. At 8.5 dpc expressed predominantly in the head mesenchyme, allantois, and the mesodermal layer of the amnion, chorion and yolk. In 9.5 dpc embryos highly expressed in the mesenchymal tissues, presomitic paraxial mesoderm, heart and branchial arches.</text>
</comment>
<comment type="similarity">
    <text evidence="6">Belongs to the AB hydrolase superfamily.</text>
</comment>
<gene>
    <name type="primary">Mest</name>
    <name type="synonym">Peg1</name>
    <name type="ORF">121a</name>
</gene>
<organism>
    <name type="scientific">Mus musculus</name>
    <name type="common">Mouse</name>
    <dbReference type="NCBI Taxonomy" id="10090"/>
    <lineage>
        <taxon>Eukaryota</taxon>
        <taxon>Metazoa</taxon>
        <taxon>Chordata</taxon>
        <taxon>Craniata</taxon>
        <taxon>Vertebrata</taxon>
        <taxon>Euteleostomi</taxon>
        <taxon>Mammalia</taxon>
        <taxon>Eutheria</taxon>
        <taxon>Euarchontoglires</taxon>
        <taxon>Glires</taxon>
        <taxon>Rodentia</taxon>
        <taxon>Myomorpha</taxon>
        <taxon>Muroidea</taxon>
        <taxon>Muridae</taxon>
        <taxon>Murinae</taxon>
        <taxon>Mus</taxon>
        <taxon>Mus</taxon>
    </lineage>
</organism>
<feature type="chain" id="PRO_0000284419" description="Mesoderm-specific transcript protein">
    <location>
        <begin position="1"/>
        <end position="335"/>
    </location>
</feature>
<feature type="transmembrane region" description="Helical" evidence="1">
    <location>
        <begin position="13"/>
        <end position="33"/>
    </location>
</feature>
<feature type="transmembrane region" description="Helical" evidence="1">
    <location>
        <begin position="63"/>
        <end position="83"/>
    </location>
</feature>
<feature type="transmembrane region" description="Helical" evidence="1">
    <location>
        <begin position="266"/>
        <end position="286"/>
    </location>
</feature>
<feature type="domain" description="AB hydrolase-1" evidence="1">
    <location>
        <begin position="71"/>
        <end position="310"/>
    </location>
</feature>
<feature type="short sequence motif" description="RVIALD">
    <location>
        <begin position="98"/>
        <end position="103"/>
    </location>
</feature>
<feature type="glycosylation site" description="N-linked (GlcNAc...) asparagine" evidence="1">
    <location>
        <position position="163"/>
    </location>
</feature>
<feature type="splice variant" id="VSP_024534" description="In isoform 2." evidence="5">
    <location>
        <begin position="1"/>
        <end position="9"/>
    </location>
</feature>
<feature type="sequence conflict" description="In Ref. 3; BAC28891." evidence="6" ref="3">
    <original>W</original>
    <variation>C</variation>
    <location>
        <position position="43"/>
    </location>
</feature>
<feature type="sequence conflict" description="In Ref. 2; AAM78507." evidence="6" ref="2">
    <original>K</original>
    <variation>N</variation>
    <location>
        <position position="171"/>
    </location>
</feature>
<keyword id="KW-0025">Alternative splicing</keyword>
<keyword id="KW-0256">Endoplasmic reticulum</keyword>
<keyword id="KW-0325">Glycoprotein</keyword>
<keyword id="KW-0378">Hydrolase</keyword>
<keyword id="KW-0472">Membrane</keyword>
<keyword id="KW-1185">Reference proteome</keyword>
<keyword id="KW-0812">Transmembrane</keyword>
<keyword id="KW-1133">Transmembrane helix</keyword>